<protein>
    <recommendedName>
        <fullName evidence="1">Aspartate--tRNA ligase</fullName>
        <ecNumber evidence="1">6.1.1.12</ecNumber>
    </recommendedName>
    <alternativeName>
        <fullName evidence="1">Aspartyl-tRNA synthetase</fullName>
        <shortName evidence="1">AspRS</shortName>
    </alternativeName>
</protein>
<accession>B7NBL7</accession>
<evidence type="ECO:0000255" key="1">
    <source>
        <dbReference type="HAMAP-Rule" id="MF_00044"/>
    </source>
</evidence>
<reference key="1">
    <citation type="journal article" date="2009" name="PLoS Genet.">
        <title>Organised genome dynamics in the Escherichia coli species results in highly diverse adaptive paths.</title>
        <authorList>
            <person name="Touchon M."/>
            <person name="Hoede C."/>
            <person name="Tenaillon O."/>
            <person name="Barbe V."/>
            <person name="Baeriswyl S."/>
            <person name="Bidet P."/>
            <person name="Bingen E."/>
            <person name="Bonacorsi S."/>
            <person name="Bouchier C."/>
            <person name="Bouvet O."/>
            <person name="Calteau A."/>
            <person name="Chiapello H."/>
            <person name="Clermont O."/>
            <person name="Cruveiller S."/>
            <person name="Danchin A."/>
            <person name="Diard M."/>
            <person name="Dossat C."/>
            <person name="Karoui M.E."/>
            <person name="Frapy E."/>
            <person name="Garry L."/>
            <person name="Ghigo J.M."/>
            <person name="Gilles A.M."/>
            <person name="Johnson J."/>
            <person name="Le Bouguenec C."/>
            <person name="Lescat M."/>
            <person name="Mangenot S."/>
            <person name="Martinez-Jehanne V."/>
            <person name="Matic I."/>
            <person name="Nassif X."/>
            <person name="Oztas S."/>
            <person name="Petit M.A."/>
            <person name="Pichon C."/>
            <person name="Rouy Z."/>
            <person name="Ruf C.S."/>
            <person name="Schneider D."/>
            <person name="Tourret J."/>
            <person name="Vacherie B."/>
            <person name="Vallenet D."/>
            <person name="Medigue C."/>
            <person name="Rocha E.P.C."/>
            <person name="Denamur E."/>
        </authorList>
    </citation>
    <scope>NUCLEOTIDE SEQUENCE [LARGE SCALE GENOMIC DNA]</scope>
    <source>
        <strain>UMN026 / ExPEC</strain>
    </source>
</reference>
<feature type="chain" id="PRO_1000198985" description="Aspartate--tRNA ligase">
    <location>
        <begin position="1"/>
        <end position="590"/>
    </location>
</feature>
<feature type="region of interest" description="Aspartate" evidence="1">
    <location>
        <begin position="195"/>
        <end position="198"/>
    </location>
</feature>
<feature type="binding site" evidence="1">
    <location>
        <position position="171"/>
    </location>
    <ligand>
        <name>L-aspartate</name>
        <dbReference type="ChEBI" id="CHEBI:29991"/>
    </ligand>
</feature>
<feature type="binding site" evidence="1">
    <location>
        <begin position="217"/>
        <end position="219"/>
    </location>
    <ligand>
        <name>ATP</name>
        <dbReference type="ChEBI" id="CHEBI:30616"/>
    </ligand>
</feature>
<feature type="binding site" evidence="1">
    <location>
        <position position="217"/>
    </location>
    <ligand>
        <name>L-aspartate</name>
        <dbReference type="ChEBI" id="CHEBI:29991"/>
    </ligand>
</feature>
<feature type="binding site" evidence="1">
    <location>
        <position position="226"/>
    </location>
    <ligand>
        <name>ATP</name>
        <dbReference type="ChEBI" id="CHEBI:30616"/>
    </ligand>
</feature>
<feature type="binding site" evidence="1">
    <location>
        <position position="448"/>
    </location>
    <ligand>
        <name>L-aspartate</name>
        <dbReference type="ChEBI" id="CHEBI:29991"/>
    </ligand>
</feature>
<feature type="binding site" evidence="1">
    <location>
        <position position="482"/>
    </location>
    <ligand>
        <name>ATP</name>
        <dbReference type="ChEBI" id="CHEBI:30616"/>
    </ligand>
</feature>
<feature type="binding site" evidence="1">
    <location>
        <position position="489"/>
    </location>
    <ligand>
        <name>L-aspartate</name>
        <dbReference type="ChEBI" id="CHEBI:29991"/>
    </ligand>
</feature>
<feature type="binding site" evidence="1">
    <location>
        <begin position="534"/>
        <end position="537"/>
    </location>
    <ligand>
        <name>ATP</name>
        <dbReference type="ChEBI" id="CHEBI:30616"/>
    </ligand>
</feature>
<organism>
    <name type="scientific">Escherichia coli O17:K52:H18 (strain UMN026 / ExPEC)</name>
    <dbReference type="NCBI Taxonomy" id="585056"/>
    <lineage>
        <taxon>Bacteria</taxon>
        <taxon>Pseudomonadati</taxon>
        <taxon>Pseudomonadota</taxon>
        <taxon>Gammaproteobacteria</taxon>
        <taxon>Enterobacterales</taxon>
        <taxon>Enterobacteriaceae</taxon>
        <taxon>Escherichia</taxon>
    </lineage>
</organism>
<proteinExistence type="inferred from homology"/>
<comment type="function">
    <text evidence="1">Catalyzes the attachment of L-aspartate to tRNA(Asp) in a two-step reaction: L-aspartate is first activated by ATP to form Asp-AMP and then transferred to the acceptor end of tRNA(Asp).</text>
</comment>
<comment type="catalytic activity">
    <reaction evidence="1">
        <text>tRNA(Asp) + L-aspartate + ATP = L-aspartyl-tRNA(Asp) + AMP + diphosphate</text>
        <dbReference type="Rhea" id="RHEA:19649"/>
        <dbReference type="Rhea" id="RHEA-COMP:9660"/>
        <dbReference type="Rhea" id="RHEA-COMP:9678"/>
        <dbReference type="ChEBI" id="CHEBI:29991"/>
        <dbReference type="ChEBI" id="CHEBI:30616"/>
        <dbReference type="ChEBI" id="CHEBI:33019"/>
        <dbReference type="ChEBI" id="CHEBI:78442"/>
        <dbReference type="ChEBI" id="CHEBI:78516"/>
        <dbReference type="ChEBI" id="CHEBI:456215"/>
        <dbReference type="EC" id="6.1.1.12"/>
    </reaction>
</comment>
<comment type="subunit">
    <text evidence="1">Homodimer.</text>
</comment>
<comment type="subcellular location">
    <subcellularLocation>
        <location evidence="1">Cytoplasm</location>
    </subcellularLocation>
</comment>
<comment type="similarity">
    <text evidence="1">Belongs to the class-II aminoacyl-tRNA synthetase family. Type 1 subfamily.</text>
</comment>
<gene>
    <name evidence="1" type="primary">aspS</name>
    <name type="ordered locus">ECUMN_2164</name>
</gene>
<sequence>MRTEYCGQLRLSHVGQQVTLCGWVNRRRDLGSLIFIDMRDREGIVQVFFDPDRADALKLASELRNEFCIQVTGTVRARDEKNINRDMATGEIEVLASSLTIINRADVLPLDSNHVNTEEARLKYRYLDLRRPEMAQRLKTRAKITSLVRRFMDDHGFLDIETPMLTKATPEGARDYLVPSRVHKGKFYALPQSPQLFKQLLMMSGFDRYYQIVKCFRDEDLRADRQPEFTQIDVETSFMTAPQVREVMEALVRHLWLEVKGVDLGDFPVMTFAEAERRYGSDKPDLRNPMELTDVADLLKSVEFAVFAGPANDPKGRVAALRVPGGASLTRKQIDEYGNFVKIYGAKGLAYIKVNERAKGLEGINSPVAKFLNAEIIEAILDRTAAQDGDMIFFGADNKKIVADAMGALRLKVGKDLGLTDESKWAPLWVIDFPMFEDDGEGGLTAMHHPFTSPKDMTAAELKAAPENAVANAYDMVINGYEVGGGSVRIHNGDMQQTVFGILGINEEEQREKFGFLLDALKYGTPPHAGLAFGLDRLTMLLTGTDNIRDVIAFPKTTAAACLMTEAPSFANPTALAELSIQVVKKAENN</sequence>
<keyword id="KW-0030">Aminoacyl-tRNA synthetase</keyword>
<keyword id="KW-0067">ATP-binding</keyword>
<keyword id="KW-0963">Cytoplasm</keyword>
<keyword id="KW-0436">Ligase</keyword>
<keyword id="KW-0547">Nucleotide-binding</keyword>
<keyword id="KW-0648">Protein biosynthesis</keyword>
<name>SYD_ECOLU</name>
<dbReference type="EC" id="6.1.1.12" evidence="1"/>
<dbReference type="EMBL" id="CU928163">
    <property type="protein sequence ID" value="CAR13357.1"/>
    <property type="molecule type" value="Genomic_DNA"/>
</dbReference>
<dbReference type="RefSeq" id="WP_001258662.1">
    <property type="nucleotide sequence ID" value="NC_011751.1"/>
</dbReference>
<dbReference type="RefSeq" id="YP_002412886.1">
    <property type="nucleotide sequence ID" value="NC_011751.1"/>
</dbReference>
<dbReference type="SMR" id="B7NBL7"/>
<dbReference type="STRING" id="585056.ECUMN_2164"/>
<dbReference type="GeneID" id="75202728"/>
<dbReference type="KEGG" id="eum:ECUMN_2164"/>
<dbReference type="PATRIC" id="fig|585056.7.peg.2349"/>
<dbReference type="HOGENOM" id="CLU_014330_3_2_6"/>
<dbReference type="Proteomes" id="UP000007097">
    <property type="component" value="Chromosome"/>
</dbReference>
<dbReference type="GO" id="GO:0005737">
    <property type="term" value="C:cytoplasm"/>
    <property type="evidence" value="ECO:0007669"/>
    <property type="project" value="UniProtKB-SubCell"/>
</dbReference>
<dbReference type="GO" id="GO:0004815">
    <property type="term" value="F:aspartate-tRNA ligase activity"/>
    <property type="evidence" value="ECO:0007669"/>
    <property type="project" value="UniProtKB-UniRule"/>
</dbReference>
<dbReference type="GO" id="GO:0005524">
    <property type="term" value="F:ATP binding"/>
    <property type="evidence" value="ECO:0007669"/>
    <property type="project" value="UniProtKB-UniRule"/>
</dbReference>
<dbReference type="GO" id="GO:0003676">
    <property type="term" value="F:nucleic acid binding"/>
    <property type="evidence" value="ECO:0007669"/>
    <property type="project" value="InterPro"/>
</dbReference>
<dbReference type="GO" id="GO:0006422">
    <property type="term" value="P:aspartyl-tRNA aminoacylation"/>
    <property type="evidence" value="ECO:0007669"/>
    <property type="project" value="UniProtKB-UniRule"/>
</dbReference>
<dbReference type="CDD" id="cd00777">
    <property type="entry name" value="AspRS_core"/>
    <property type="match status" value="1"/>
</dbReference>
<dbReference type="CDD" id="cd04317">
    <property type="entry name" value="EcAspRS_like_N"/>
    <property type="match status" value="1"/>
</dbReference>
<dbReference type="FunFam" id="2.40.50.140:FF:000080">
    <property type="entry name" value="Aspartate--tRNA ligase"/>
    <property type="match status" value="1"/>
</dbReference>
<dbReference type="FunFam" id="3.30.1360.30:FF:000001">
    <property type="entry name" value="Aspartate--tRNA ligase"/>
    <property type="match status" value="1"/>
</dbReference>
<dbReference type="Gene3D" id="3.30.930.10">
    <property type="entry name" value="Bira Bifunctional Protein, Domain 2"/>
    <property type="match status" value="1"/>
</dbReference>
<dbReference type="Gene3D" id="3.30.1360.30">
    <property type="entry name" value="GAD-like domain"/>
    <property type="match status" value="1"/>
</dbReference>
<dbReference type="Gene3D" id="2.40.50.140">
    <property type="entry name" value="Nucleic acid-binding proteins"/>
    <property type="match status" value="1"/>
</dbReference>
<dbReference type="HAMAP" id="MF_00044">
    <property type="entry name" value="Asp_tRNA_synth_type1"/>
    <property type="match status" value="1"/>
</dbReference>
<dbReference type="InterPro" id="IPR004364">
    <property type="entry name" value="Aa-tRNA-synt_II"/>
</dbReference>
<dbReference type="InterPro" id="IPR006195">
    <property type="entry name" value="aa-tRNA-synth_II"/>
</dbReference>
<dbReference type="InterPro" id="IPR045864">
    <property type="entry name" value="aa-tRNA-synth_II/BPL/LPL"/>
</dbReference>
<dbReference type="InterPro" id="IPR004524">
    <property type="entry name" value="Asp-tRNA-ligase_1"/>
</dbReference>
<dbReference type="InterPro" id="IPR047089">
    <property type="entry name" value="Asp-tRNA-ligase_1_N"/>
</dbReference>
<dbReference type="InterPro" id="IPR002312">
    <property type="entry name" value="Asp/Asn-tRNA-synth_IIb"/>
</dbReference>
<dbReference type="InterPro" id="IPR047090">
    <property type="entry name" value="AspRS_core"/>
</dbReference>
<dbReference type="InterPro" id="IPR004115">
    <property type="entry name" value="GAD-like_sf"/>
</dbReference>
<dbReference type="InterPro" id="IPR029351">
    <property type="entry name" value="GAD_dom"/>
</dbReference>
<dbReference type="InterPro" id="IPR012340">
    <property type="entry name" value="NA-bd_OB-fold"/>
</dbReference>
<dbReference type="InterPro" id="IPR004365">
    <property type="entry name" value="NA-bd_OB_tRNA"/>
</dbReference>
<dbReference type="NCBIfam" id="TIGR00459">
    <property type="entry name" value="aspS_bact"/>
    <property type="match status" value="1"/>
</dbReference>
<dbReference type="NCBIfam" id="NF001750">
    <property type="entry name" value="PRK00476.1"/>
    <property type="match status" value="1"/>
</dbReference>
<dbReference type="PANTHER" id="PTHR22594:SF5">
    <property type="entry name" value="ASPARTATE--TRNA LIGASE, MITOCHONDRIAL"/>
    <property type="match status" value="1"/>
</dbReference>
<dbReference type="PANTHER" id="PTHR22594">
    <property type="entry name" value="ASPARTYL/LYSYL-TRNA SYNTHETASE"/>
    <property type="match status" value="1"/>
</dbReference>
<dbReference type="Pfam" id="PF02938">
    <property type="entry name" value="GAD"/>
    <property type="match status" value="1"/>
</dbReference>
<dbReference type="Pfam" id="PF00152">
    <property type="entry name" value="tRNA-synt_2"/>
    <property type="match status" value="1"/>
</dbReference>
<dbReference type="Pfam" id="PF01336">
    <property type="entry name" value="tRNA_anti-codon"/>
    <property type="match status" value="1"/>
</dbReference>
<dbReference type="PRINTS" id="PR01042">
    <property type="entry name" value="TRNASYNTHASP"/>
</dbReference>
<dbReference type="SUPFAM" id="SSF55681">
    <property type="entry name" value="Class II aaRS and biotin synthetases"/>
    <property type="match status" value="1"/>
</dbReference>
<dbReference type="SUPFAM" id="SSF55261">
    <property type="entry name" value="GAD domain-like"/>
    <property type="match status" value="1"/>
</dbReference>
<dbReference type="SUPFAM" id="SSF50249">
    <property type="entry name" value="Nucleic acid-binding proteins"/>
    <property type="match status" value="1"/>
</dbReference>
<dbReference type="PROSITE" id="PS50862">
    <property type="entry name" value="AA_TRNA_LIGASE_II"/>
    <property type="match status" value="1"/>
</dbReference>